<protein>
    <recommendedName>
        <fullName>Probable eukaryotic translation initiation factor 4 gamma homolog</fullName>
        <shortName>eIF-4-gamma</shortName>
    </recommendedName>
</protein>
<organism>
    <name type="scientific">Vairimorpha ceranae (strain BRL01)</name>
    <name type="common">Microsporidian parasite</name>
    <name type="synonym">Nosema ceranae</name>
    <dbReference type="NCBI Taxonomy" id="578460"/>
    <lineage>
        <taxon>Eukaryota</taxon>
        <taxon>Fungi</taxon>
        <taxon>Fungi incertae sedis</taxon>
        <taxon>Microsporidia</taxon>
        <taxon>Nosematidae</taxon>
        <taxon>Vairimorpha</taxon>
    </lineage>
</organism>
<keyword id="KW-0963">Cytoplasm</keyword>
<keyword id="KW-0396">Initiation factor</keyword>
<keyword id="KW-0648">Protein biosynthesis</keyword>
<keyword id="KW-1185">Reference proteome</keyword>
<keyword id="KW-0694">RNA-binding</keyword>
<keyword id="KW-0810">Translation regulation</keyword>
<proteinExistence type="inferred from homology"/>
<dbReference type="EMBL" id="ACOL01000057">
    <property type="protein sequence ID" value="EEQ82443.1"/>
    <property type="molecule type" value="Genomic_DNA"/>
</dbReference>
<dbReference type="RefSeq" id="XP_002996114.1">
    <property type="nucleotide sequence ID" value="XM_002996068.1"/>
</dbReference>
<dbReference type="SMR" id="C4V8K5"/>
<dbReference type="STRING" id="578460.C4V8K5"/>
<dbReference type="KEGG" id="nce:NCER_100836"/>
<dbReference type="VEuPathDB" id="MicrosporidiaDB:NCER_100836"/>
<dbReference type="HOGENOM" id="CLU_446896_0_0_1"/>
<dbReference type="InParanoid" id="C4V8K5"/>
<dbReference type="OMA" id="MITHEEF"/>
<dbReference type="OrthoDB" id="5870at6029"/>
<dbReference type="Proteomes" id="UP000009082">
    <property type="component" value="Unassembled WGS sequence"/>
</dbReference>
<dbReference type="GO" id="GO:0016281">
    <property type="term" value="C:eukaryotic translation initiation factor 4F complex"/>
    <property type="evidence" value="ECO:0007669"/>
    <property type="project" value="TreeGrafter"/>
</dbReference>
<dbReference type="GO" id="GO:0003729">
    <property type="term" value="F:mRNA binding"/>
    <property type="evidence" value="ECO:0007669"/>
    <property type="project" value="TreeGrafter"/>
</dbReference>
<dbReference type="GO" id="GO:0003743">
    <property type="term" value="F:translation initiation factor activity"/>
    <property type="evidence" value="ECO:0007669"/>
    <property type="project" value="UniProtKB-KW"/>
</dbReference>
<dbReference type="GO" id="GO:0006417">
    <property type="term" value="P:regulation of translation"/>
    <property type="evidence" value="ECO:0007669"/>
    <property type="project" value="UniProtKB-KW"/>
</dbReference>
<dbReference type="Gene3D" id="1.25.40.180">
    <property type="match status" value="1"/>
</dbReference>
<dbReference type="InterPro" id="IPR016024">
    <property type="entry name" value="ARM-type_fold"/>
</dbReference>
<dbReference type="InterPro" id="IPR003890">
    <property type="entry name" value="MIF4G-like_typ-3"/>
</dbReference>
<dbReference type="PANTHER" id="PTHR23253">
    <property type="entry name" value="EUKARYOTIC TRANSLATION INITIATION FACTOR 4 GAMMA"/>
    <property type="match status" value="1"/>
</dbReference>
<dbReference type="PANTHER" id="PTHR23253:SF78">
    <property type="entry name" value="EUKARYOTIC TRANSLATION INITIATION FACTOR 4G1, ISOFORM B-RELATED"/>
    <property type="match status" value="1"/>
</dbReference>
<dbReference type="Pfam" id="PF02854">
    <property type="entry name" value="MIF4G"/>
    <property type="match status" value="1"/>
</dbReference>
<dbReference type="SUPFAM" id="SSF48371">
    <property type="entry name" value="ARM repeat"/>
    <property type="match status" value="1"/>
</dbReference>
<reference key="1">
    <citation type="journal article" date="2009" name="PLoS Pathog.">
        <title>Genomic analyses of the microsporidian Nosema ceranae, an emergent pathogen of honey bees.</title>
        <authorList>
            <person name="Cornman R.S."/>
            <person name="Chen Y.P."/>
            <person name="Schatz M.C."/>
            <person name="Street C."/>
            <person name="Zhao Y."/>
            <person name="Desany B."/>
            <person name="Egholm M."/>
            <person name="Hutchison S."/>
            <person name="Pettis J.S."/>
            <person name="Lipkin W.I."/>
            <person name="Evans J.D."/>
        </authorList>
    </citation>
    <scope>NUCLEOTIDE SEQUENCE [LARGE SCALE GENOMIC DNA]</scope>
    <source>
        <strain>BRL01</strain>
    </source>
</reference>
<accession>C4V8K5</accession>
<feature type="chain" id="PRO_0000388437" description="Probable eukaryotic translation initiation factor 4 gamma homolog">
    <location>
        <begin position="1"/>
        <end position="598"/>
    </location>
</feature>
<feature type="domain" description="MIF4G">
    <location>
        <begin position="209"/>
        <end position="434"/>
    </location>
</feature>
<feature type="region of interest" description="Disordered" evidence="2">
    <location>
        <begin position="65"/>
        <end position="86"/>
    </location>
</feature>
<feature type="compositionally biased region" description="Acidic residues" evidence="2">
    <location>
        <begin position="66"/>
        <end position="79"/>
    </location>
</feature>
<evidence type="ECO:0000250" key="1"/>
<evidence type="ECO:0000256" key="2">
    <source>
        <dbReference type="SAM" id="MobiDB-lite"/>
    </source>
</evidence>
<evidence type="ECO:0000305" key="3"/>
<comment type="function">
    <text evidence="1">Component of the protein complex eIF4F, which is involved in the recognition of the mRNA cap, ATP-dependent unwinding of 5'-terminal secondary structure and recruitment of mRNA to the ribosome.</text>
</comment>
<comment type="subunit">
    <text evidence="1">Component of the eIF4F complex, which composition varies with external and internal environmental conditions.</text>
</comment>
<comment type="subcellular location">
    <subcellularLocation>
        <location evidence="1">Cytoplasm</location>
    </subcellularLocation>
</comment>
<comment type="similarity">
    <text evidence="3">Belongs to the eukaryotic initiation factor 4G family.</text>
</comment>
<sequence>MVNEVPTLKKKIIFKYFKPLLTFTKKEDPYELRVKSAPPLNIIEERKEPKKFVLCKPDGTPITLDDLSDISDSEEEEDTKLDMKDSIKEDVKDSIKEDVKDSSKEDVKDDVIEDVKGSINEEINSTCGTCSFINLKREKILNELLEMYRVEESVPYSFVPTNVPQIMYSVGEILNCINKIPFTLKLLKKDVNKIPVNYKEFKINKETIIEKATFELNKLTNTNIKRIITNLKNLNIETIQQAKYLGNLIVFKAINEPQYCNLYAMVVGALKKDFKSKEELGLHKKQTAFFGTVLTSAMKVLEEKVEWADTKVLDKNLYKNAFEYERAFEEQETERYLRKKKTLGAVNLLCDLYNLDVITLKHIQSRLNEFLNIENEEVVEVLGKFIEKIGEKMYLNDKSDYANMICSYLDACKNKYSNRVKFYIMDVLDKKKNWKKPVSKTENLFSSLIMEDEPALDTPYQYQEQVIANEEEEDSLELLKTIDNIYQDLKDAYDEEDEIMIADNFKIASNTFGKISFFSTYFSECITNSRKSKLLVPFVINFFNETNLNESELFDIINKHKEKLNELKIDFPLSQKIMSLYVINFVVDRLSKKIHMIN</sequence>
<gene>
    <name type="primary">EIF4G</name>
    <name type="ORF">NCER_100836</name>
</gene>
<name>IF4G_VAIC1</name>